<name>LEUC_STRSV</name>
<feature type="chain" id="PRO_1000063619" description="3-isopropylmalate dehydratase large subunit">
    <location>
        <begin position="1"/>
        <end position="460"/>
    </location>
</feature>
<feature type="binding site" evidence="1">
    <location>
        <position position="338"/>
    </location>
    <ligand>
        <name>[4Fe-4S] cluster</name>
        <dbReference type="ChEBI" id="CHEBI:49883"/>
    </ligand>
</feature>
<feature type="binding site" evidence="1">
    <location>
        <position position="398"/>
    </location>
    <ligand>
        <name>[4Fe-4S] cluster</name>
        <dbReference type="ChEBI" id="CHEBI:49883"/>
    </ligand>
</feature>
<feature type="binding site" evidence="1">
    <location>
        <position position="401"/>
    </location>
    <ligand>
        <name>[4Fe-4S] cluster</name>
        <dbReference type="ChEBI" id="CHEBI:49883"/>
    </ligand>
</feature>
<gene>
    <name evidence="1" type="primary">leuC</name>
    <name type="ordered locus">SSA_0980</name>
</gene>
<reference key="1">
    <citation type="journal article" date="2007" name="J. Bacteriol.">
        <title>Genome of the opportunistic pathogen Streptococcus sanguinis.</title>
        <authorList>
            <person name="Xu P."/>
            <person name="Alves J.M."/>
            <person name="Kitten T."/>
            <person name="Brown A."/>
            <person name="Chen Z."/>
            <person name="Ozaki L.S."/>
            <person name="Manque P."/>
            <person name="Ge X."/>
            <person name="Serrano M.G."/>
            <person name="Puiu D."/>
            <person name="Hendricks S."/>
            <person name="Wang Y."/>
            <person name="Chaplin M.D."/>
            <person name="Akan D."/>
            <person name="Paik S."/>
            <person name="Peterson D.L."/>
            <person name="Macrina F.L."/>
            <person name="Buck G.A."/>
        </authorList>
    </citation>
    <scope>NUCLEOTIDE SEQUENCE [LARGE SCALE GENOMIC DNA]</scope>
    <source>
        <strain>SK36</strain>
    </source>
</reference>
<evidence type="ECO:0000255" key="1">
    <source>
        <dbReference type="HAMAP-Rule" id="MF_01026"/>
    </source>
</evidence>
<protein>
    <recommendedName>
        <fullName evidence="1">3-isopropylmalate dehydratase large subunit</fullName>
        <ecNumber evidence="1">4.2.1.33</ecNumber>
    </recommendedName>
    <alternativeName>
        <fullName evidence="1">Alpha-IPM isomerase</fullName>
        <shortName evidence="1">IPMI</shortName>
    </alternativeName>
    <alternativeName>
        <fullName evidence="1">Isopropylmalate isomerase</fullName>
    </alternativeName>
</protein>
<proteinExistence type="inferred from homology"/>
<organism>
    <name type="scientific">Streptococcus sanguinis (strain SK36)</name>
    <dbReference type="NCBI Taxonomy" id="388919"/>
    <lineage>
        <taxon>Bacteria</taxon>
        <taxon>Bacillati</taxon>
        <taxon>Bacillota</taxon>
        <taxon>Bacilli</taxon>
        <taxon>Lactobacillales</taxon>
        <taxon>Streptococcaceae</taxon>
        <taxon>Streptococcus</taxon>
    </lineage>
</organism>
<dbReference type="EC" id="4.2.1.33" evidence="1"/>
<dbReference type="EMBL" id="CP000387">
    <property type="protein sequence ID" value="ABN44397.1"/>
    <property type="molecule type" value="Genomic_DNA"/>
</dbReference>
<dbReference type="RefSeq" id="WP_011836839.1">
    <property type="nucleotide sequence ID" value="NC_009009.1"/>
</dbReference>
<dbReference type="RefSeq" id="YP_001034947.1">
    <property type="nucleotide sequence ID" value="NC_009009.1"/>
</dbReference>
<dbReference type="SMR" id="A3CMJ2"/>
<dbReference type="STRING" id="388919.SSA_0980"/>
<dbReference type="KEGG" id="ssa:SSA_0980"/>
<dbReference type="PATRIC" id="fig|388919.9.peg.929"/>
<dbReference type="eggNOG" id="COG0065">
    <property type="taxonomic scope" value="Bacteria"/>
</dbReference>
<dbReference type="HOGENOM" id="CLU_006714_3_4_9"/>
<dbReference type="OrthoDB" id="9802769at2"/>
<dbReference type="UniPathway" id="UPA00048">
    <property type="reaction ID" value="UER00071"/>
</dbReference>
<dbReference type="Proteomes" id="UP000002148">
    <property type="component" value="Chromosome"/>
</dbReference>
<dbReference type="GO" id="GO:0003861">
    <property type="term" value="F:3-isopropylmalate dehydratase activity"/>
    <property type="evidence" value="ECO:0007669"/>
    <property type="project" value="UniProtKB-UniRule"/>
</dbReference>
<dbReference type="GO" id="GO:0051539">
    <property type="term" value="F:4 iron, 4 sulfur cluster binding"/>
    <property type="evidence" value="ECO:0007669"/>
    <property type="project" value="UniProtKB-KW"/>
</dbReference>
<dbReference type="GO" id="GO:0046872">
    <property type="term" value="F:metal ion binding"/>
    <property type="evidence" value="ECO:0007669"/>
    <property type="project" value="UniProtKB-KW"/>
</dbReference>
<dbReference type="GO" id="GO:0009098">
    <property type="term" value="P:L-leucine biosynthetic process"/>
    <property type="evidence" value="ECO:0007669"/>
    <property type="project" value="UniProtKB-UniRule"/>
</dbReference>
<dbReference type="CDD" id="cd01583">
    <property type="entry name" value="IPMI"/>
    <property type="match status" value="1"/>
</dbReference>
<dbReference type="Gene3D" id="3.30.499.10">
    <property type="entry name" value="Aconitase, domain 3"/>
    <property type="match status" value="2"/>
</dbReference>
<dbReference type="HAMAP" id="MF_01026">
    <property type="entry name" value="LeuC_type1"/>
    <property type="match status" value="1"/>
</dbReference>
<dbReference type="InterPro" id="IPR004430">
    <property type="entry name" value="3-IsopropMal_deHydase_lsu"/>
</dbReference>
<dbReference type="InterPro" id="IPR015931">
    <property type="entry name" value="Acnase/IPM_dHydase_lsu_aba_1/3"/>
</dbReference>
<dbReference type="InterPro" id="IPR001030">
    <property type="entry name" value="Acoase/IPM_deHydtase_lsu_aba"/>
</dbReference>
<dbReference type="InterPro" id="IPR018136">
    <property type="entry name" value="Aconitase_4Fe-4S_BS"/>
</dbReference>
<dbReference type="InterPro" id="IPR036008">
    <property type="entry name" value="Aconitase_4Fe-4S_dom"/>
</dbReference>
<dbReference type="InterPro" id="IPR050067">
    <property type="entry name" value="IPM_dehydratase_rel_enz"/>
</dbReference>
<dbReference type="InterPro" id="IPR033941">
    <property type="entry name" value="IPMI_cat"/>
</dbReference>
<dbReference type="NCBIfam" id="TIGR00170">
    <property type="entry name" value="leuC"/>
    <property type="match status" value="1"/>
</dbReference>
<dbReference type="NCBIfam" id="NF004016">
    <property type="entry name" value="PRK05478.1"/>
    <property type="match status" value="1"/>
</dbReference>
<dbReference type="NCBIfam" id="NF009116">
    <property type="entry name" value="PRK12466.1"/>
    <property type="match status" value="1"/>
</dbReference>
<dbReference type="PANTHER" id="PTHR43822:SF9">
    <property type="entry name" value="3-ISOPROPYLMALATE DEHYDRATASE"/>
    <property type="match status" value="1"/>
</dbReference>
<dbReference type="PANTHER" id="PTHR43822">
    <property type="entry name" value="HOMOACONITASE, MITOCHONDRIAL-RELATED"/>
    <property type="match status" value="1"/>
</dbReference>
<dbReference type="Pfam" id="PF00330">
    <property type="entry name" value="Aconitase"/>
    <property type="match status" value="1"/>
</dbReference>
<dbReference type="PRINTS" id="PR00415">
    <property type="entry name" value="ACONITASE"/>
</dbReference>
<dbReference type="SUPFAM" id="SSF53732">
    <property type="entry name" value="Aconitase iron-sulfur domain"/>
    <property type="match status" value="1"/>
</dbReference>
<dbReference type="PROSITE" id="PS00450">
    <property type="entry name" value="ACONITASE_1"/>
    <property type="match status" value="1"/>
</dbReference>
<dbReference type="PROSITE" id="PS01244">
    <property type="entry name" value="ACONITASE_2"/>
    <property type="match status" value="1"/>
</dbReference>
<accession>A3CMJ2</accession>
<comment type="function">
    <text evidence="1">Catalyzes the isomerization between 2-isopropylmalate and 3-isopropylmalate, via the formation of 2-isopropylmaleate.</text>
</comment>
<comment type="catalytic activity">
    <reaction evidence="1">
        <text>(2R,3S)-3-isopropylmalate = (2S)-2-isopropylmalate</text>
        <dbReference type="Rhea" id="RHEA:32287"/>
        <dbReference type="ChEBI" id="CHEBI:1178"/>
        <dbReference type="ChEBI" id="CHEBI:35121"/>
        <dbReference type="EC" id="4.2.1.33"/>
    </reaction>
</comment>
<comment type="cofactor">
    <cofactor evidence="1">
        <name>[4Fe-4S] cluster</name>
        <dbReference type="ChEBI" id="CHEBI:49883"/>
    </cofactor>
    <text evidence="1">Binds 1 [4Fe-4S] cluster per subunit.</text>
</comment>
<comment type="pathway">
    <text evidence="1">Amino-acid biosynthesis; L-leucine biosynthesis; L-leucine from 3-methyl-2-oxobutanoate: step 2/4.</text>
</comment>
<comment type="subunit">
    <text evidence="1">Heterodimer of LeuC and LeuD.</text>
</comment>
<comment type="similarity">
    <text evidence="1">Belongs to the aconitase/IPM isomerase family. LeuC type 1 subfamily.</text>
</comment>
<keyword id="KW-0004">4Fe-4S</keyword>
<keyword id="KW-0028">Amino-acid biosynthesis</keyword>
<keyword id="KW-0100">Branched-chain amino acid biosynthesis</keyword>
<keyword id="KW-0408">Iron</keyword>
<keyword id="KW-0411">Iron-sulfur</keyword>
<keyword id="KW-0432">Leucine biosynthesis</keyword>
<keyword id="KW-0456">Lyase</keyword>
<keyword id="KW-0479">Metal-binding</keyword>
<keyword id="KW-1185">Reference proteome</keyword>
<sequence length="460" mass="50302">MAGKSIFDKLWERHLITGEEGQPQLMYVDQHYIHEVTSPQAFQGLRDAGRKVRRPDLTFGTFDHNVPTVNIYDIRDVISKAQIDKLSENVKDFGIEHAAHGSELQGIVHMVGPETGKTQPGKFIVCGDSHTATHGAFGAIAFGIGTSEVEHVFATQTIWQVKPKKMLVKFTGVPPKGVYSKDFILALIARYGVAAGVGHVVEYAGDAIDHLTMEERMTICNMSIEFGSKMGIMNPDQKTYDYVKGRPGAPKDFEAAVADWKTLVSDPDAVYDKVIEIDVSELAPMVTWGTNPSMGVEFGAAFPEIRDMNDERAYNYMDLSPGKKAEDIDLGYIFIGSCTNARLSDLQLAAKFVAGKHIAPNLTAIVVPGSRPVKRAAEKMGLDKIFMDAGFEWRDPGCSMCLGMNPDKVPDGVHCASTSNRNFEDRQGFGAKTHLCSPAMAAAAAIAGRFVDVRQLPEVQ</sequence>